<proteinExistence type="inferred from homology"/>
<evidence type="ECO:0000255" key="1">
    <source>
        <dbReference type="HAMAP-Rule" id="MF_01246"/>
    </source>
</evidence>
<reference key="1">
    <citation type="journal article" date="2009" name="PLoS Genet.">
        <title>Organised genome dynamics in the Escherichia coli species results in highly diverse adaptive paths.</title>
        <authorList>
            <person name="Touchon M."/>
            <person name="Hoede C."/>
            <person name="Tenaillon O."/>
            <person name="Barbe V."/>
            <person name="Baeriswyl S."/>
            <person name="Bidet P."/>
            <person name="Bingen E."/>
            <person name="Bonacorsi S."/>
            <person name="Bouchier C."/>
            <person name="Bouvet O."/>
            <person name="Calteau A."/>
            <person name="Chiapello H."/>
            <person name="Clermont O."/>
            <person name="Cruveiller S."/>
            <person name="Danchin A."/>
            <person name="Diard M."/>
            <person name="Dossat C."/>
            <person name="Karoui M.E."/>
            <person name="Frapy E."/>
            <person name="Garry L."/>
            <person name="Ghigo J.M."/>
            <person name="Gilles A.M."/>
            <person name="Johnson J."/>
            <person name="Le Bouguenec C."/>
            <person name="Lescat M."/>
            <person name="Mangenot S."/>
            <person name="Martinez-Jehanne V."/>
            <person name="Matic I."/>
            <person name="Nassif X."/>
            <person name="Oztas S."/>
            <person name="Petit M.A."/>
            <person name="Pichon C."/>
            <person name="Rouy Z."/>
            <person name="Ruf C.S."/>
            <person name="Schneider D."/>
            <person name="Tourret J."/>
            <person name="Vacherie B."/>
            <person name="Vallenet D."/>
            <person name="Medigue C."/>
            <person name="Rocha E.P.C."/>
            <person name="Denamur E."/>
        </authorList>
    </citation>
    <scope>NUCLEOTIDE SEQUENCE [LARGE SCALE GENOMIC DNA]</scope>
    <source>
        <strain>55989 / EAEC</strain>
    </source>
</reference>
<gene>
    <name evidence="1" type="primary">chbG</name>
    <name type="ordered locus">EC55989_1901</name>
</gene>
<organism>
    <name type="scientific">Escherichia coli (strain 55989 / EAEC)</name>
    <dbReference type="NCBI Taxonomy" id="585055"/>
    <lineage>
        <taxon>Bacteria</taxon>
        <taxon>Pseudomonadati</taxon>
        <taxon>Pseudomonadota</taxon>
        <taxon>Gammaproteobacteria</taxon>
        <taxon>Enterobacterales</taxon>
        <taxon>Enterobacteriaceae</taxon>
        <taxon>Escherichia</taxon>
    </lineage>
</organism>
<sequence>MERLLIVNADDFGLSKGQNYGIIEACRNGIVTSTTALVNGQAIDHAVQLSRDEPSLAIGMHFVLTMGKPLTAMPGLTRDGVLGKWIWQLAEEDALPLEEITQELASQYLRFIELFGRKPTHLDSHHHVHMFPQIFPIVARFAAEEGIALRIDRQPLSNSGDLPANLRSSQGFSSAFYGEEISEALFLQVLDDASHRGDLSLEVMCHPAFIDNTIRQSAYCFPRLTELEVLTSASLKYAIAERGYRLGSYLNV</sequence>
<protein>
    <recommendedName>
        <fullName evidence="1">Chitooligosaccharide deacetylase</fullName>
        <shortName evidence="1">COD</shortName>
        <ecNumber evidence="1">3.5.1.105</ecNumber>
    </recommendedName>
    <alternativeName>
        <fullName evidence="1">Chitin disaccharide deacetylase</fullName>
    </alternativeName>
    <alternativeName>
        <fullName evidence="1">Chitobiose deacetylase</fullName>
    </alternativeName>
    <alternativeName>
        <fullName evidence="1">Chitobiose-6P deacetylase</fullName>
    </alternativeName>
    <alternativeName>
        <fullName evidence="1">Chitotriose deacetylase</fullName>
    </alternativeName>
    <alternativeName>
        <fullName evidence="1">Chitotriose-6P deacetylase</fullName>
    </alternativeName>
</protein>
<name>CHBG_ECO55</name>
<dbReference type="EC" id="3.5.1.105" evidence="1"/>
<dbReference type="EMBL" id="CU928145">
    <property type="protein sequence ID" value="CAU97760.1"/>
    <property type="molecule type" value="Genomic_DNA"/>
</dbReference>
<dbReference type="RefSeq" id="WP_000440450.1">
    <property type="nucleotide sequence ID" value="NC_011748.1"/>
</dbReference>
<dbReference type="SMR" id="B7L6K7"/>
<dbReference type="KEGG" id="eck:EC55989_1901"/>
<dbReference type="HOGENOM" id="CLU_064244_4_1_6"/>
<dbReference type="UniPathway" id="UPA00349"/>
<dbReference type="Proteomes" id="UP000000746">
    <property type="component" value="Chromosome"/>
</dbReference>
<dbReference type="GO" id="GO:0005737">
    <property type="term" value="C:cytoplasm"/>
    <property type="evidence" value="ECO:0007669"/>
    <property type="project" value="UniProtKB-SubCell"/>
</dbReference>
<dbReference type="GO" id="GO:0036311">
    <property type="term" value="F:chitin disaccharide deacetylase activity"/>
    <property type="evidence" value="ECO:0007669"/>
    <property type="project" value="UniProtKB-UniRule"/>
</dbReference>
<dbReference type="GO" id="GO:0019213">
    <property type="term" value="F:deacetylase activity"/>
    <property type="evidence" value="ECO:0007669"/>
    <property type="project" value="TreeGrafter"/>
</dbReference>
<dbReference type="GO" id="GO:0046872">
    <property type="term" value="F:metal ion binding"/>
    <property type="evidence" value="ECO:0007669"/>
    <property type="project" value="UniProtKB-KW"/>
</dbReference>
<dbReference type="GO" id="GO:0006032">
    <property type="term" value="P:chitin catabolic process"/>
    <property type="evidence" value="ECO:0007669"/>
    <property type="project" value="UniProtKB-UniPathway"/>
</dbReference>
<dbReference type="GO" id="GO:0052777">
    <property type="term" value="P:diacetylchitobiose catabolic process"/>
    <property type="evidence" value="ECO:0007669"/>
    <property type="project" value="UniProtKB-UniRule"/>
</dbReference>
<dbReference type="GO" id="GO:0000272">
    <property type="term" value="P:polysaccharide catabolic process"/>
    <property type="evidence" value="ECO:0007669"/>
    <property type="project" value="UniProtKB-UniRule"/>
</dbReference>
<dbReference type="CDD" id="cd10803">
    <property type="entry name" value="YdjC_EF3048_like"/>
    <property type="match status" value="1"/>
</dbReference>
<dbReference type="FunFam" id="3.20.20.370:FF:000001">
    <property type="entry name" value="Chitooligosaccharide deacetylase"/>
    <property type="match status" value="1"/>
</dbReference>
<dbReference type="Gene3D" id="3.20.20.370">
    <property type="entry name" value="Glycoside hydrolase/deacetylase"/>
    <property type="match status" value="1"/>
</dbReference>
<dbReference type="HAMAP" id="MF_01246">
    <property type="entry name" value="COD"/>
    <property type="match status" value="1"/>
</dbReference>
<dbReference type="InterPro" id="IPR022948">
    <property type="entry name" value="COD_ChbG_bac"/>
</dbReference>
<dbReference type="InterPro" id="IPR011330">
    <property type="entry name" value="Glyco_hydro/deAcase_b/a-brl"/>
</dbReference>
<dbReference type="InterPro" id="IPR006879">
    <property type="entry name" value="YdjC-like"/>
</dbReference>
<dbReference type="NCBIfam" id="NF002559">
    <property type="entry name" value="PRK02134.1"/>
    <property type="match status" value="1"/>
</dbReference>
<dbReference type="PANTHER" id="PTHR31609:SF1">
    <property type="entry name" value="CARBOHYDRATE DEACETYLASE"/>
    <property type="match status" value="1"/>
</dbReference>
<dbReference type="PANTHER" id="PTHR31609">
    <property type="entry name" value="YDJC DEACETYLASE FAMILY MEMBER"/>
    <property type="match status" value="1"/>
</dbReference>
<dbReference type="Pfam" id="PF04794">
    <property type="entry name" value="YdjC"/>
    <property type="match status" value="1"/>
</dbReference>
<dbReference type="SUPFAM" id="SSF88713">
    <property type="entry name" value="Glycoside hydrolase/deacetylase"/>
    <property type="match status" value="1"/>
</dbReference>
<keyword id="KW-0119">Carbohydrate metabolism</keyword>
<keyword id="KW-0146">Chitin degradation</keyword>
<keyword id="KW-0963">Cytoplasm</keyword>
<keyword id="KW-0378">Hydrolase</keyword>
<keyword id="KW-0460">Magnesium</keyword>
<keyword id="KW-0479">Metal-binding</keyword>
<keyword id="KW-0624">Polysaccharide degradation</keyword>
<keyword id="KW-1185">Reference proteome</keyword>
<comment type="function">
    <text evidence="1">Involved in the degradation of chitin. ChbG is essential for growth on the acetylated chitooligosaccharides chitobiose and chitotriose but is dispensable for growth on cellobiose and chitosan dimer, the deacetylated form of chitobiose. Deacetylation of chitobiose-6-P and chitotriose-6-P is necessary for both the activation of the chb promoter by the regulatory protein ChbR and the hydrolysis of phosphorylated beta-glucosides by the phospho-beta-glucosidase ChbF. Catalyzes the removal of only one acetyl group from chitobiose-6-P to yield monoacetylchitobiose-6-P, the inducer of ChbR and the substrate of ChbF.</text>
</comment>
<comment type="catalytic activity">
    <reaction evidence="1">
        <text>N,N'-diacetylchitobiose + H2O = N-acetyl-beta-D-glucosaminyl-(1-&gt;4)-D-glucosamine + acetate</text>
        <dbReference type="Rhea" id="RHEA:27469"/>
        <dbReference type="ChEBI" id="CHEBI:15377"/>
        <dbReference type="ChEBI" id="CHEBI:28681"/>
        <dbReference type="ChEBI" id="CHEBI:30089"/>
        <dbReference type="ChEBI" id="CHEBI:59910"/>
        <dbReference type="EC" id="3.5.1.105"/>
    </reaction>
</comment>
<comment type="catalytic activity">
    <reaction evidence="1">
        <text>diacetylchitobiose-6'-phosphate + H2O = N'-monoacetylchitobiose-6'-phosphate + acetate</text>
        <dbReference type="Rhea" id="RHEA:35083"/>
        <dbReference type="ChEBI" id="CHEBI:15377"/>
        <dbReference type="ChEBI" id="CHEBI:30089"/>
        <dbReference type="ChEBI" id="CHEBI:64883"/>
        <dbReference type="ChEBI" id="CHEBI:71315"/>
    </reaction>
</comment>
<comment type="cofactor">
    <cofactor evidence="1">
        <name>Mg(2+)</name>
        <dbReference type="ChEBI" id="CHEBI:18420"/>
    </cofactor>
</comment>
<comment type="pathway">
    <text evidence="1">Glycan degradation; chitin degradation.</text>
</comment>
<comment type="subunit">
    <text evidence="1">Homodimer.</text>
</comment>
<comment type="subcellular location">
    <subcellularLocation>
        <location evidence="1">Cytoplasm</location>
    </subcellularLocation>
</comment>
<comment type="similarity">
    <text evidence="1">Belongs to the YdjC deacetylase family. ChbG subfamily.</text>
</comment>
<accession>B7L6K7</accession>
<feature type="chain" id="PRO_1000165046" description="Chitooligosaccharide deacetylase">
    <location>
        <begin position="1"/>
        <end position="252"/>
    </location>
</feature>
<feature type="binding site" evidence="1">
    <location>
        <position position="61"/>
    </location>
    <ligand>
        <name>Mg(2+)</name>
        <dbReference type="ChEBI" id="CHEBI:18420"/>
    </ligand>
</feature>
<feature type="binding site" evidence="1">
    <location>
        <position position="125"/>
    </location>
    <ligand>
        <name>Mg(2+)</name>
        <dbReference type="ChEBI" id="CHEBI:18420"/>
    </ligand>
</feature>